<sequence length="427" mass="48829">MKRRKRGRGIVNADRISQLPEALIIQILSLLPTEVAVTTSVLSKQWQFLWKMLPKLNFDSLDQRHEFKTFSKNVKRALLSHKAPVLHSLHLIVHLHLCNSMNTAKLIGIAFACNLRKLVLEVDGGRFSIPESLYNCETLDTLELKYSILMDVPSSICLKSLRTLHLHYVDFKDNESALNLLSGCPNLENLVVHRYPFSSVKTYTIAVSSLKRLTIYTSSTVDPRAGYVINSPSLTYLKIVGQIGFCLIENVPELVEASMIVSSQIINKNLLESLTSVKRLFLEFSPLMIKFPAGSIFYQLVYLELLTHEAECLNLLTLMLNSSPKLQILKLLSPKYQSWKKDVVGKWNKPKIVPECLLFHLETFMWKGYEWKRNDETEVAKYILSNTNRLKRATFFSKPISSEERVKMVKNLNSVVRALNSCQLLIK</sequence>
<feature type="chain" id="PRO_0000281972" description="Putative F-box/FBD/LRR-repeat protein At4g13965">
    <location>
        <begin position="1"/>
        <end position="427"/>
    </location>
</feature>
<feature type="domain" description="F-box">
    <location>
        <begin position="13"/>
        <end position="61"/>
    </location>
</feature>
<feature type="repeat" description="LRR 1">
    <location>
        <begin position="67"/>
        <end position="93"/>
    </location>
</feature>
<feature type="repeat" description="LRR 2">
    <location>
        <begin position="98"/>
        <end position="122"/>
    </location>
</feature>
<feature type="repeat" description="LRR 3">
    <location>
        <begin position="141"/>
        <end position="168"/>
    </location>
</feature>
<feature type="repeat" description="LRR 4">
    <location>
        <begin position="169"/>
        <end position="194"/>
    </location>
</feature>
<feature type="repeat" description="LRR 5">
    <location>
        <begin position="213"/>
        <end position="241"/>
    </location>
</feature>
<feature type="repeat" description="LRR 6">
    <location>
        <begin position="258"/>
        <end position="284"/>
    </location>
</feature>
<feature type="domain" description="FBD">
    <location>
        <begin position="346"/>
        <end position="396"/>
    </location>
</feature>
<organism>
    <name type="scientific">Arabidopsis thaliana</name>
    <name type="common">Mouse-ear cress</name>
    <dbReference type="NCBI Taxonomy" id="3702"/>
    <lineage>
        <taxon>Eukaryota</taxon>
        <taxon>Viridiplantae</taxon>
        <taxon>Streptophyta</taxon>
        <taxon>Embryophyta</taxon>
        <taxon>Tracheophyta</taxon>
        <taxon>Spermatophyta</taxon>
        <taxon>Magnoliopsida</taxon>
        <taxon>eudicotyledons</taxon>
        <taxon>Gunneridae</taxon>
        <taxon>Pentapetalae</taxon>
        <taxon>rosids</taxon>
        <taxon>malvids</taxon>
        <taxon>Brassicales</taxon>
        <taxon>Brassicaceae</taxon>
        <taxon>Camelineae</taxon>
        <taxon>Arabidopsis</taxon>
    </lineage>
</organism>
<proteinExistence type="predicted"/>
<gene>
    <name type="ordered locus">At4g13965</name>
    <name type="ORF">FCAALL</name>
</gene>
<protein>
    <recommendedName>
        <fullName>Putative F-box/FBD/LRR-repeat protein At4g13965</fullName>
    </recommendedName>
</protein>
<keyword id="KW-0433">Leucine-rich repeat</keyword>
<keyword id="KW-1185">Reference proteome</keyword>
<keyword id="KW-0677">Repeat</keyword>
<dbReference type="EMBL" id="Z97335">
    <property type="status" value="NOT_ANNOTATED_CDS"/>
    <property type="molecule type" value="Genomic_DNA"/>
</dbReference>
<dbReference type="EMBL" id="AL161537">
    <property type="status" value="NOT_ANNOTATED_CDS"/>
    <property type="molecule type" value="Genomic_DNA"/>
</dbReference>
<dbReference type="EMBL" id="CP002687">
    <property type="status" value="NOT_ANNOTATED_CDS"/>
    <property type="molecule type" value="Genomic_DNA"/>
</dbReference>
<dbReference type="PaxDb" id="3702-AT4G13965.1"/>
<dbReference type="Araport" id="AT4G13965"/>
<dbReference type="TAIR" id="AT4G13965"/>
<dbReference type="HOGENOM" id="CLU_010721_1_2_1"/>
<dbReference type="InParanoid" id="Q3EA38"/>
<dbReference type="PRO" id="PR:Q3EA38"/>
<dbReference type="Proteomes" id="UP000006548">
    <property type="component" value="Chromosome 4"/>
</dbReference>
<dbReference type="CDD" id="cd22160">
    <property type="entry name" value="F-box_AtFBL13-like"/>
    <property type="match status" value="1"/>
</dbReference>
<dbReference type="Gene3D" id="3.80.10.10">
    <property type="entry name" value="Ribonuclease Inhibitor"/>
    <property type="match status" value="1"/>
</dbReference>
<dbReference type="InterPro" id="IPR036047">
    <property type="entry name" value="F-box-like_dom_sf"/>
</dbReference>
<dbReference type="InterPro" id="IPR053781">
    <property type="entry name" value="F-box_AtFBL13-like"/>
</dbReference>
<dbReference type="InterPro" id="IPR001810">
    <property type="entry name" value="F-box_dom"/>
</dbReference>
<dbReference type="InterPro" id="IPR006566">
    <property type="entry name" value="FBD"/>
</dbReference>
<dbReference type="InterPro" id="IPR050232">
    <property type="entry name" value="FBL13/AtMIF1-like"/>
</dbReference>
<dbReference type="InterPro" id="IPR032675">
    <property type="entry name" value="LRR_dom_sf"/>
</dbReference>
<dbReference type="InterPro" id="IPR013101">
    <property type="entry name" value="LRR_PRU1-like"/>
</dbReference>
<dbReference type="PANTHER" id="PTHR31900:SF34">
    <property type="entry name" value="EMB|CAB62440.1-RELATED"/>
    <property type="match status" value="1"/>
</dbReference>
<dbReference type="PANTHER" id="PTHR31900">
    <property type="entry name" value="F-BOX/RNI SUPERFAMILY PROTEIN-RELATED"/>
    <property type="match status" value="1"/>
</dbReference>
<dbReference type="Pfam" id="PF00646">
    <property type="entry name" value="F-box"/>
    <property type="match status" value="1"/>
</dbReference>
<dbReference type="Pfam" id="PF08387">
    <property type="entry name" value="FBD"/>
    <property type="match status" value="1"/>
</dbReference>
<dbReference type="Pfam" id="PF07723">
    <property type="entry name" value="LRR_2"/>
    <property type="match status" value="1"/>
</dbReference>
<dbReference type="SMART" id="SM00579">
    <property type="entry name" value="FBD"/>
    <property type="match status" value="1"/>
</dbReference>
<dbReference type="SUPFAM" id="SSF81383">
    <property type="entry name" value="F-box domain"/>
    <property type="match status" value="1"/>
</dbReference>
<dbReference type="SUPFAM" id="SSF52058">
    <property type="entry name" value="L domain-like"/>
    <property type="match status" value="1"/>
</dbReference>
<name>FDL48_ARATH</name>
<reference key="1">
    <citation type="journal article" date="1998" name="Nature">
        <title>Analysis of 1.9 Mb of contiguous sequence from chromosome 4 of Arabidopsis thaliana.</title>
        <authorList>
            <person name="Bevan M."/>
            <person name="Bancroft I."/>
            <person name="Bent E."/>
            <person name="Love K."/>
            <person name="Goodman H.M."/>
            <person name="Dean C."/>
            <person name="Bergkamp R."/>
            <person name="Dirkse W."/>
            <person name="van Staveren M."/>
            <person name="Stiekema W."/>
            <person name="Drost L."/>
            <person name="Ridley P."/>
            <person name="Hudson S.-A."/>
            <person name="Patel K."/>
            <person name="Murphy G."/>
            <person name="Piffanelli P."/>
            <person name="Wedler H."/>
            <person name="Wedler E."/>
            <person name="Wambutt R."/>
            <person name="Weitzenegger T."/>
            <person name="Pohl T."/>
            <person name="Terryn N."/>
            <person name="Gielen J."/>
            <person name="Villarroel R."/>
            <person name="De Clercq R."/>
            <person name="van Montagu M."/>
            <person name="Lecharny A."/>
            <person name="Aubourg S."/>
            <person name="Gy I."/>
            <person name="Kreis M."/>
            <person name="Lao N."/>
            <person name="Kavanagh T."/>
            <person name="Hempel S."/>
            <person name="Kotter P."/>
            <person name="Entian K.-D."/>
            <person name="Rieger M."/>
            <person name="Schaefer M."/>
            <person name="Funk B."/>
            <person name="Mueller-Auer S."/>
            <person name="Silvey M."/>
            <person name="James R."/>
            <person name="Monfort A."/>
            <person name="Pons A."/>
            <person name="Puigdomenech P."/>
            <person name="Douka A."/>
            <person name="Voukelatou E."/>
            <person name="Milioni D."/>
            <person name="Hatzopoulos P."/>
            <person name="Piravandi E."/>
            <person name="Obermaier B."/>
            <person name="Hilbert H."/>
            <person name="Duesterhoeft A."/>
            <person name="Moores T."/>
            <person name="Jones J.D.G."/>
            <person name="Eneva T."/>
            <person name="Palme K."/>
            <person name="Benes V."/>
            <person name="Rechmann S."/>
            <person name="Ansorge W."/>
            <person name="Cooke R."/>
            <person name="Berger C."/>
            <person name="Delseny M."/>
            <person name="Voet M."/>
            <person name="Volckaert G."/>
            <person name="Mewes H.-W."/>
            <person name="Klosterman S."/>
            <person name="Schueller C."/>
            <person name="Chalwatzis N."/>
        </authorList>
    </citation>
    <scope>NUCLEOTIDE SEQUENCE [LARGE SCALE GENOMIC DNA]</scope>
    <source>
        <strain>cv. Columbia</strain>
    </source>
</reference>
<reference key="2">
    <citation type="journal article" date="1999" name="Nature">
        <title>Sequence and analysis of chromosome 4 of the plant Arabidopsis thaliana.</title>
        <authorList>
            <person name="Mayer K.F.X."/>
            <person name="Schueller C."/>
            <person name="Wambutt R."/>
            <person name="Murphy G."/>
            <person name="Volckaert G."/>
            <person name="Pohl T."/>
            <person name="Duesterhoeft A."/>
            <person name="Stiekema W."/>
            <person name="Entian K.-D."/>
            <person name="Terryn N."/>
            <person name="Harris B."/>
            <person name="Ansorge W."/>
            <person name="Brandt P."/>
            <person name="Grivell L.A."/>
            <person name="Rieger M."/>
            <person name="Weichselgartner M."/>
            <person name="de Simone V."/>
            <person name="Obermaier B."/>
            <person name="Mache R."/>
            <person name="Mueller M."/>
            <person name="Kreis M."/>
            <person name="Delseny M."/>
            <person name="Puigdomenech P."/>
            <person name="Watson M."/>
            <person name="Schmidtheini T."/>
            <person name="Reichert B."/>
            <person name="Portetelle D."/>
            <person name="Perez-Alonso M."/>
            <person name="Boutry M."/>
            <person name="Bancroft I."/>
            <person name="Vos P."/>
            <person name="Hoheisel J."/>
            <person name="Zimmermann W."/>
            <person name="Wedler H."/>
            <person name="Ridley P."/>
            <person name="Langham S.-A."/>
            <person name="McCullagh B."/>
            <person name="Bilham L."/>
            <person name="Robben J."/>
            <person name="van der Schueren J."/>
            <person name="Grymonprez B."/>
            <person name="Chuang Y.-J."/>
            <person name="Vandenbussche F."/>
            <person name="Braeken M."/>
            <person name="Weltjens I."/>
            <person name="Voet M."/>
            <person name="Bastiaens I."/>
            <person name="Aert R."/>
            <person name="Defoor E."/>
            <person name="Weitzenegger T."/>
            <person name="Bothe G."/>
            <person name="Ramsperger U."/>
            <person name="Hilbert H."/>
            <person name="Braun M."/>
            <person name="Holzer E."/>
            <person name="Brandt A."/>
            <person name="Peters S."/>
            <person name="van Staveren M."/>
            <person name="Dirkse W."/>
            <person name="Mooijman P."/>
            <person name="Klein Lankhorst R."/>
            <person name="Rose M."/>
            <person name="Hauf J."/>
            <person name="Koetter P."/>
            <person name="Berneiser S."/>
            <person name="Hempel S."/>
            <person name="Feldpausch M."/>
            <person name="Lamberth S."/>
            <person name="Van den Daele H."/>
            <person name="De Keyser A."/>
            <person name="Buysshaert C."/>
            <person name="Gielen J."/>
            <person name="Villarroel R."/>
            <person name="De Clercq R."/>
            <person name="van Montagu M."/>
            <person name="Rogers J."/>
            <person name="Cronin A."/>
            <person name="Quail M.A."/>
            <person name="Bray-Allen S."/>
            <person name="Clark L."/>
            <person name="Doggett J."/>
            <person name="Hall S."/>
            <person name="Kay M."/>
            <person name="Lennard N."/>
            <person name="McLay K."/>
            <person name="Mayes R."/>
            <person name="Pettett A."/>
            <person name="Rajandream M.A."/>
            <person name="Lyne M."/>
            <person name="Benes V."/>
            <person name="Rechmann S."/>
            <person name="Borkova D."/>
            <person name="Bloecker H."/>
            <person name="Scharfe M."/>
            <person name="Grimm M."/>
            <person name="Loehnert T.-H."/>
            <person name="Dose S."/>
            <person name="de Haan M."/>
            <person name="Maarse A.C."/>
            <person name="Schaefer M."/>
            <person name="Mueller-Auer S."/>
            <person name="Gabel C."/>
            <person name="Fuchs M."/>
            <person name="Fartmann B."/>
            <person name="Granderath K."/>
            <person name="Dauner D."/>
            <person name="Herzl A."/>
            <person name="Neumann S."/>
            <person name="Argiriou A."/>
            <person name="Vitale D."/>
            <person name="Liguori R."/>
            <person name="Piravandi E."/>
            <person name="Massenet O."/>
            <person name="Quigley F."/>
            <person name="Clabauld G."/>
            <person name="Muendlein A."/>
            <person name="Felber R."/>
            <person name="Schnabl S."/>
            <person name="Hiller R."/>
            <person name="Schmidt W."/>
            <person name="Lecharny A."/>
            <person name="Aubourg S."/>
            <person name="Chefdor F."/>
            <person name="Cooke R."/>
            <person name="Berger C."/>
            <person name="Monfort A."/>
            <person name="Casacuberta E."/>
            <person name="Gibbons T."/>
            <person name="Weber N."/>
            <person name="Vandenbol M."/>
            <person name="Bargues M."/>
            <person name="Terol J."/>
            <person name="Torres A."/>
            <person name="Perez-Perez A."/>
            <person name="Purnelle B."/>
            <person name="Bent E."/>
            <person name="Johnson S."/>
            <person name="Tacon D."/>
            <person name="Jesse T."/>
            <person name="Heijnen L."/>
            <person name="Schwarz S."/>
            <person name="Scholler P."/>
            <person name="Heber S."/>
            <person name="Francs P."/>
            <person name="Bielke C."/>
            <person name="Frishman D."/>
            <person name="Haase D."/>
            <person name="Lemcke K."/>
            <person name="Mewes H.-W."/>
            <person name="Stocker S."/>
            <person name="Zaccaria P."/>
            <person name="Bevan M."/>
            <person name="Wilson R.K."/>
            <person name="de la Bastide M."/>
            <person name="Habermann K."/>
            <person name="Parnell L."/>
            <person name="Dedhia N."/>
            <person name="Gnoj L."/>
            <person name="Schutz K."/>
            <person name="Huang E."/>
            <person name="Spiegel L."/>
            <person name="Sekhon M."/>
            <person name="Murray J."/>
            <person name="Sheet P."/>
            <person name="Cordes M."/>
            <person name="Abu-Threideh J."/>
            <person name="Stoneking T."/>
            <person name="Kalicki J."/>
            <person name="Graves T."/>
            <person name="Harmon G."/>
            <person name="Edwards J."/>
            <person name="Latreille P."/>
            <person name="Courtney L."/>
            <person name="Cloud J."/>
            <person name="Abbott A."/>
            <person name="Scott K."/>
            <person name="Johnson D."/>
            <person name="Minx P."/>
            <person name="Bentley D."/>
            <person name="Fulton B."/>
            <person name="Miller N."/>
            <person name="Greco T."/>
            <person name="Kemp K."/>
            <person name="Kramer J."/>
            <person name="Fulton L."/>
            <person name="Mardis E."/>
            <person name="Dante M."/>
            <person name="Pepin K."/>
            <person name="Hillier L.W."/>
            <person name="Nelson J."/>
            <person name="Spieth J."/>
            <person name="Ryan E."/>
            <person name="Andrews S."/>
            <person name="Geisel C."/>
            <person name="Layman D."/>
            <person name="Du H."/>
            <person name="Ali J."/>
            <person name="Berghoff A."/>
            <person name="Jones K."/>
            <person name="Drone K."/>
            <person name="Cotton M."/>
            <person name="Joshu C."/>
            <person name="Antonoiu B."/>
            <person name="Zidanic M."/>
            <person name="Strong C."/>
            <person name="Sun H."/>
            <person name="Lamar B."/>
            <person name="Yordan C."/>
            <person name="Ma P."/>
            <person name="Zhong J."/>
            <person name="Preston R."/>
            <person name="Vil D."/>
            <person name="Shekher M."/>
            <person name="Matero A."/>
            <person name="Shah R."/>
            <person name="Swaby I.K."/>
            <person name="O'Shaughnessy A."/>
            <person name="Rodriguez M."/>
            <person name="Hoffman J."/>
            <person name="Till S."/>
            <person name="Granat S."/>
            <person name="Shohdy N."/>
            <person name="Hasegawa A."/>
            <person name="Hameed A."/>
            <person name="Lodhi M."/>
            <person name="Johnson A."/>
            <person name="Chen E."/>
            <person name="Marra M.A."/>
            <person name="Martienssen R."/>
            <person name="McCombie W.R."/>
        </authorList>
    </citation>
    <scope>NUCLEOTIDE SEQUENCE [LARGE SCALE GENOMIC DNA]</scope>
    <source>
        <strain>cv. Columbia</strain>
    </source>
</reference>
<reference key="3">
    <citation type="journal article" date="2017" name="Plant J.">
        <title>Araport11: a complete reannotation of the Arabidopsis thaliana reference genome.</title>
        <authorList>
            <person name="Cheng C.Y."/>
            <person name="Krishnakumar V."/>
            <person name="Chan A.P."/>
            <person name="Thibaud-Nissen F."/>
            <person name="Schobel S."/>
            <person name="Town C.D."/>
        </authorList>
    </citation>
    <scope>GENOME REANNOTATION</scope>
    <source>
        <strain>cv. Columbia</strain>
    </source>
</reference>
<accession>Q3EA38</accession>
<accession>F4JTV9</accession>